<reference key="1">
    <citation type="journal article" date="2003" name="Genomics">
        <title>Evolution of the cystatin B gene: implications for the origin of its variable dodecamer tandem repeat in humans.</title>
        <authorList>
            <person name="Osawa M."/>
            <person name="Kaneko M."/>
            <person name="Horiuchi H."/>
            <person name="Kitano T."/>
            <person name="Kawamoto Y."/>
            <person name="Saitou N."/>
            <person name="Umetsu K."/>
        </authorList>
    </citation>
    <scope>NUCLEOTIDE SEQUENCE [GENOMIC DNA]</scope>
</reference>
<sequence length="98" mass="11154">MMCGAPSATQPATAETQHIADQVRSQLEEKENKKFPVFKAVSFKSQVVAGTNYFIKVHVGDEEFVHLRVFQSLPHENKPLTLSNYQTNKAKHDELTYF</sequence>
<feature type="chain" id="PRO_0000207139" description="Cystatin-B">
    <location>
        <begin position="1"/>
        <end position="98"/>
    </location>
</feature>
<feature type="short sequence motif" description="Secondary area of contact" evidence="1">
    <location>
        <begin position="46"/>
        <end position="50"/>
    </location>
</feature>
<feature type="site" description="Reactive site" evidence="1">
    <location>
        <position position="4"/>
    </location>
</feature>
<feature type="modified residue" description="N-acetylmethionine" evidence="2 3">
    <location>
        <position position="1"/>
    </location>
</feature>
<accession>Q8I030</accession>
<organism>
    <name type="scientific">Pan troglodytes</name>
    <name type="common">Chimpanzee</name>
    <dbReference type="NCBI Taxonomy" id="9598"/>
    <lineage>
        <taxon>Eukaryota</taxon>
        <taxon>Metazoa</taxon>
        <taxon>Chordata</taxon>
        <taxon>Craniata</taxon>
        <taxon>Vertebrata</taxon>
        <taxon>Euteleostomi</taxon>
        <taxon>Mammalia</taxon>
        <taxon>Eutheria</taxon>
        <taxon>Euarchontoglires</taxon>
        <taxon>Primates</taxon>
        <taxon>Haplorrhini</taxon>
        <taxon>Catarrhini</taxon>
        <taxon>Hominidae</taxon>
        <taxon>Pan</taxon>
    </lineage>
</organism>
<comment type="function">
    <text evidence="1">This is an intracellular thiol proteinase inhibitor. Tightly binding reversible inhibitor of cathepsins L, H and B (By similarity).</text>
</comment>
<comment type="subunit">
    <text evidence="1">Able to form dimers stabilized by noncovalent forces.</text>
</comment>
<comment type="subcellular location">
    <subcellularLocation>
        <location evidence="1">Cytoplasm</location>
    </subcellularLocation>
    <subcellularLocation>
        <location evidence="1">Nucleus</location>
    </subcellularLocation>
</comment>
<comment type="similarity">
    <text evidence="3">Belongs to the cystatin family.</text>
</comment>
<keyword id="KW-0007">Acetylation</keyword>
<keyword id="KW-0963">Cytoplasm</keyword>
<keyword id="KW-0539">Nucleus</keyword>
<keyword id="KW-0646">Protease inhibitor</keyword>
<keyword id="KW-1185">Reference proteome</keyword>
<keyword id="KW-0789">Thiol protease inhibitor</keyword>
<dbReference type="EMBL" id="AB083086">
    <property type="protein sequence ID" value="BAC20305.1"/>
    <property type="molecule type" value="Genomic_DNA"/>
</dbReference>
<dbReference type="RefSeq" id="NP_001009095.1">
    <property type="nucleotide sequence ID" value="NM_001009095.1"/>
</dbReference>
<dbReference type="BMRB" id="Q8I030"/>
<dbReference type="SMR" id="Q8I030"/>
<dbReference type="FunCoup" id="Q8I030">
    <property type="interactions" value="503"/>
</dbReference>
<dbReference type="STRING" id="9598.ENSPTRP00000086988"/>
<dbReference type="MEROPS" id="I25.003"/>
<dbReference type="PaxDb" id="9598-ENSPTRP00000024032"/>
<dbReference type="Ensembl" id="ENSPTRT00000077184.1">
    <property type="protein sequence ID" value="ENSPTRP00000086988.1"/>
    <property type="gene ID" value="ENSPTRG00000048077.1"/>
</dbReference>
<dbReference type="GeneID" id="458593"/>
<dbReference type="KEGG" id="ptr:458593"/>
<dbReference type="CTD" id="1476"/>
<dbReference type="VGNC" id="VGNC:14658">
    <property type="gene designation" value="CSTB"/>
</dbReference>
<dbReference type="eggNOG" id="ENOG502SF2X">
    <property type="taxonomic scope" value="Eukaryota"/>
</dbReference>
<dbReference type="GeneTree" id="ENSGT00940000154826"/>
<dbReference type="HOGENOM" id="CLU_150234_2_0_1"/>
<dbReference type="InParanoid" id="Q8I030"/>
<dbReference type="OMA" id="LPHENQP"/>
<dbReference type="OrthoDB" id="1802at9604"/>
<dbReference type="TreeFam" id="TF333174"/>
<dbReference type="Proteomes" id="UP000002277">
    <property type="component" value="Chromosome 21"/>
</dbReference>
<dbReference type="Bgee" id="ENSPTRG00000048077">
    <property type="expression patterns" value="Expressed in fibroblast and 21 other cell types or tissues"/>
</dbReference>
<dbReference type="GO" id="GO:0005829">
    <property type="term" value="C:cytosol"/>
    <property type="evidence" value="ECO:0000318"/>
    <property type="project" value="GO_Central"/>
</dbReference>
<dbReference type="GO" id="GO:0005615">
    <property type="term" value="C:extracellular space"/>
    <property type="evidence" value="ECO:0007669"/>
    <property type="project" value="Ensembl"/>
</dbReference>
<dbReference type="GO" id="GO:0005730">
    <property type="term" value="C:nucleolus"/>
    <property type="evidence" value="ECO:0007669"/>
    <property type="project" value="Ensembl"/>
</dbReference>
<dbReference type="GO" id="GO:0004869">
    <property type="term" value="F:cysteine-type endopeptidase inhibitor activity"/>
    <property type="evidence" value="ECO:0000318"/>
    <property type="project" value="GO_Central"/>
</dbReference>
<dbReference type="GO" id="GO:0002020">
    <property type="term" value="F:protease binding"/>
    <property type="evidence" value="ECO:0007669"/>
    <property type="project" value="Ensembl"/>
</dbReference>
<dbReference type="GO" id="GO:0008344">
    <property type="term" value="P:adult locomotory behavior"/>
    <property type="evidence" value="ECO:0007669"/>
    <property type="project" value="Ensembl"/>
</dbReference>
<dbReference type="GO" id="GO:1990000">
    <property type="term" value="P:amyloid fibril formation"/>
    <property type="evidence" value="ECO:0007669"/>
    <property type="project" value="Ensembl"/>
</dbReference>
<dbReference type="GO" id="GO:0045861">
    <property type="term" value="P:negative regulation of proteolysis"/>
    <property type="evidence" value="ECO:0007669"/>
    <property type="project" value="Ensembl"/>
</dbReference>
<dbReference type="CDD" id="cd00042">
    <property type="entry name" value="CY"/>
    <property type="match status" value="1"/>
</dbReference>
<dbReference type="FunFam" id="3.10.450.10:FF:000001">
    <property type="entry name" value="Cystatin-A"/>
    <property type="match status" value="1"/>
</dbReference>
<dbReference type="Gene3D" id="3.10.450.10">
    <property type="match status" value="1"/>
</dbReference>
<dbReference type="InterPro" id="IPR000010">
    <property type="entry name" value="Cystatin_dom"/>
</dbReference>
<dbReference type="InterPro" id="IPR046350">
    <property type="entry name" value="Cystatin_sf"/>
</dbReference>
<dbReference type="InterPro" id="IPR018073">
    <property type="entry name" value="Prot_inh_cystat_CS"/>
</dbReference>
<dbReference type="InterPro" id="IPR001713">
    <property type="entry name" value="Prot_inh_stefin"/>
</dbReference>
<dbReference type="PANTHER" id="PTHR11414">
    <property type="entry name" value="CYSTATIN FAMILY MEMBER"/>
    <property type="match status" value="1"/>
</dbReference>
<dbReference type="PANTHER" id="PTHR11414:SF22">
    <property type="entry name" value="CYSTATIN-B"/>
    <property type="match status" value="1"/>
</dbReference>
<dbReference type="Pfam" id="PF00031">
    <property type="entry name" value="Cystatin"/>
    <property type="match status" value="1"/>
</dbReference>
<dbReference type="PRINTS" id="PR00295">
    <property type="entry name" value="STEFINA"/>
</dbReference>
<dbReference type="SMART" id="SM00043">
    <property type="entry name" value="CY"/>
    <property type="match status" value="1"/>
</dbReference>
<dbReference type="SUPFAM" id="SSF54403">
    <property type="entry name" value="Cystatin/monellin"/>
    <property type="match status" value="1"/>
</dbReference>
<dbReference type="PROSITE" id="PS00287">
    <property type="entry name" value="CYSTATIN"/>
    <property type="match status" value="1"/>
</dbReference>
<gene>
    <name type="primary">CSTB</name>
    <name type="synonym">STFB</name>
</gene>
<proteinExistence type="inferred from homology"/>
<evidence type="ECO:0000250" key="1"/>
<evidence type="ECO:0000250" key="2">
    <source>
        <dbReference type="UniProtKB" id="P25417"/>
    </source>
</evidence>
<evidence type="ECO:0000305" key="3"/>
<name>CYTB_PANTR</name>
<protein>
    <recommendedName>
        <fullName>Cystatin-B</fullName>
    </recommendedName>
    <alternativeName>
        <fullName>Stefin-B</fullName>
    </alternativeName>
</protein>